<feature type="chain" id="PRO_0000347316" description="14-3-3-like protein 3">
    <location>
        <begin position="1" status="less than"/>
        <end position="10" status="greater than"/>
    </location>
</feature>
<feature type="non-terminal residue" evidence="3">
    <location>
        <position position="1"/>
    </location>
</feature>
<feature type="non-terminal residue" evidence="3">
    <location>
        <position position="10"/>
    </location>
</feature>
<name>14333_PSEMZ</name>
<organism>
    <name type="scientific">Pseudotsuga menziesii</name>
    <name type="common">Douglas-fir</name>
    <name type="synonym">Abies menziesii</name>
    <dbReference type="NCBI Taxonomy" id="3357"/>
    <lineage>
        <taxon>Eukaryota</taxon>
        <taxon>Viridiplantae</taxon>
        <taxon>Streptophyta</taxon>
        <taxon>Embryophyta</taxon>
        <taxon>Tracheophyta</taxon>
        <taxon>Spermatophyta</taxon>
        <taxon>Pinopsida</taxon>
        <taxon>Pinidae</taxon>
        <taxon>Conifers I</taxon>
        <taxon>Pinales</taxon>
        <taxon>Pinaceae</taxon>
        <taxon>Pseudotsuga</taxon>
    </lineage>
</organism>
<protein>
    <recommendedName>
        <fullName evidence="1">14-3-3-like protein 3</fullName>
    </recommendedName>
</protein>
<proteinExistence type="evidence at protein level"/>
<evidence type="ECO:0000250" key="1">
    <source>
        <dbReference type="UniProtKB" id="P93213"/>
    </source>
</evidence>
<evidence type="ECO:0000255" key="2"/>
<evidence type="ECO:0000303" key="3">
    <source>
    </source>
</evidence>
<comment type="similarity">
    <text evidence="2">Belongs to the 14-3-3 family.</text>
</comment>
<accession>P85941</accession>
<reference key="1">
    <citation type="journal article" date="2008" name="J. Proteomics">
        <title>A proteomics approach to identify proteins differentially expressed in Douglas-fir seedlings infected by Phellinus sulphurascens.</title>
        <authorList>
            <person name="Islam M.A."/>
            <person name="Sturrock R.N."/>
            <person name="Ekramoddoullah A.K.M."/>
        </authorList>
    </citation>
    <scope>IDENTIFICATION BY MASS SPECTROMETRY</scope>
</reference>
<sequence length="10" mass="1202">LDVELTVEER</sequence>